<proteinExistence type="inferred from homology"/>
<evidence type="ECO:0000255" key="1">
    <source>
        <dbReference type="HAMAP-Rule" id="MF_01440"/>
    </source>
</evidence>
<keyword id="KW-0145">Chemotaxis</keyword>
<keyword id="KW-0378">Hydrolase</keyword>
<keyword id="KW-1185">Reference proteome</keyword>
<sequence>MAETTMKININNFKRIDVMQGEKQVSSEDDVVFSTVLGSCIAACLYDPIAKIGGMNHFLLAEPSGSDHDPNSLKRYGVYAMEVLINAMLAKGAHRNRLRARLYGGATMRSGFGDIGIKNAEFARRFLQDEHILLNAEDIGGTTARRVDFCPALGLARCRHVENQRPVERLEVVPDKAGDVTFF</sequence>
<reference key="1">
    <citation type="journal article" date="2005" name="Nat. Biotechnol.">
        <title>The genome sequence of the ethanologenic bacterium Zymomonas mobilis ZM4.</title>
        <authorList>
            <person name="Seo J.-S."/>
            <person name="Chong H."/>
            <person name="Park H.S."/>
            <person name="Yoon K.-O."/>
            <person name="Jung C."/>
            <person name="Kim J.J."/>
            <person name="Hong J.H."/>
            <person name="Kim H."/>
            <person name="Kim J.-H."/>
            <person name="Kil J.-I."/>
            <person name="Park C.J."/>
            <person name="Oh H.-M."/>
            <person name="Lee J.-S."/>
            <person name="Jin S.-J."/>
            <person name="Um H.-W."/>
            <person name="Lee H.-J."/>
            <person name="Oh S.-J."/>
            <person name="Kim J.Y."/>
            <person name="Kang H.L."/>
            <person name="Lee S.Y."/>
            <person name="Lee K.J."/>
            <person name="Kang H.S."/>
        </authorList>
    </citation>
    <scope>NUCLEOTIDE SEQUENCE [LARGE SCALE GENOMIC DNA]</scope>
    <source>
        <strain>ATCC 31821 / ZM4 / CP4</strain>
    </source>
</reference>
<accession>Q5NRF0</accession>
<name>CHED_ZYMMO</name>
<organism>
    <name type="scientific">Zymomonas mobilis subsp. mobilis (strain ATCC 31821 / ZM4 / CP4)</name>
    <dbReference type="NCBI Taxonomy" id="264203"/>
    <lineage>
        <taxon>Bacteria</taxon>
        <taxon>Pseudomonadati</taxon>
        <taxon>Pseudomonadota</taxon>
        <taxon>Alphaproteobacteria</taxon>
        <taxon>Sphingomonadales</taxon>
        <taxon>Zymomonadaceae</taxon>
        <taxon>Zymomonas</taxon>
    </lineage>
</organism>
<dbReference type="EC" id="3.5.1.44" evidence="1"/>
<dbReference type="EMBL" id="AE008692">
    <property type="protein sequence ID" value="AAV88704.2"/>
    <property type="molecule type" value="Genomic_DNA"/>
</dbReference>
<dbReference type="SMR" id="Q5NRF0"/>
<dbReference type="STRING" id="264203.ZMO0080"/>
<dbReference type="KEGG" id="zmo:ZMO0080"/>
<dbReference type="eggNOG" id="COG1871">
    <property type="taxonomic scope" value="Bacteria"/>
</dbReference>
<dbReference type="HOGENOM" id="CLU_087854_0_1_5"/>
<dbReference type="Proteomes" id="UP000001173">
    <property type="component" value="Chromosome"/>
</dbReference>
<dbReference type="GO" id="GO:0050568">
    <property type="term" value="F:protein-glutamine glutaminase activity"/>
    <property type="evidence" value="ECO:0007669"/>
    <property type="project" value="UniProtKB-UniRule"/>
</dbReference>
<dbReference type="GO" id="GO:0006935">
    <property type="term" value="P:chemotaxis"/>
    <property type="evidence" value="ECO:0007669"/>
    <property type="project" value="UniProtKB-UniRule"/>
</dbReference>
<dbReference type="CDD" id="cd16352">
    <property type="entry name" value="CheD"/>
    <property type="match status" value="1"/>
</dbReference>
<dbReference type="Gene3D" id="3.30.1330.200">
    <property type="match status" value="1"/>
</dbReference>
<dbReference type="HAMAP" id="MF_01440">
    <property type="entry name" value="CheD"/>
    <property type="match status" value="1"/>
</dbReference>
<dbReference type="InterPro" id="IPR038592">
    <property type="entry name" value="CheD-like_sf"/>
</dbReference>
<dbReference type="InterPro" id="IPR005659">
    <property type="entry name" value="Chemorcpt_Glu_NH3ase_CheD"/>
</dbReference>
<dbReference type="InterPro" id="IPR011324">
    <property type="entry name" value="Cytotoxic_necrot_fac-like_cat"/>
</dbReference>
<dbReference type="PANTHER" id="PTHR35147">
    <property type="entry name" value="CHEMORECEPTOR GLUTAMINE DEAMIDASE CHED-RELATED"/>
    <property type="match status" value="1"/>
</dbReference>
<dbReference type="PANTHER" id="PTHR35147:SF2">
    <property type="entry name" value="CHEMORECEPTOR GLUTAMINE DEAMIDASE CHED-RELATED"/>
    <property type="match status" value="1"/>
</dbReference>
<dbReference type="Pfam" id="PF03975">
    <property type="entry name" value="CheD"/>
    <property type="match status" value="1"/>
</dbReference>
<dbReference type="SUPFAM" id="SSF64438">
    <property type="entry name" value="CNF1/YfiH-like putative cysteine hydrolases"/>
    <property type="match status" value="1"/>
</dbReference>
<gene>
    <name evidence="1" type="primary">cheD</name>
    <name type="ordered locus">ZMO0080</name>
</gene>
<protein>
    <recommendedName>
        <fullName evidence="1">Probable chemoreceptor glutamine deamidase CheD</fullName>
        <ecNumber evidence="1">3.5.1.44</ecNumber>
    </recommendedName>
</protein>
<comment type="function">
    <text evidence="1">Probably deamidates glutamine residues to glutamate on methyl-accepting chemotaxis receptors (MCPs), playing an important role in chemotaxis.</text>
</comment>
<comment type="catalytic activity">
    <reaction evidence="1">
        <text>L-glutaminyl-[protein] + H2O = L-glutamyl-[protein] + NH4(+)</text>
        <dbReference type="Rhea" id="RHEA:16441"/>
        <dbReference type="Rhea" id="RHEA-COMP:10207"/>
        <dbReference type="Rhea" id="RHEA-COMP:10208"/>
        <dbReference type="ChEBI" id="CHEBI:15377"/>
        <dbReference type="ChEBI" id="CHEBI:28938"/>
        <dbReference type="ChEBI" id="CHEBI:29973"/>
        <dbReference type="ChEBI" id="CHEBI:30011"/>
        <dbReference type="EC" id="3.5.1.44"/>
    </reaction>
</comment>
<comment type="similarity">
    <text evidence="1">Belongs to the CheD family.</text>
</comment>
<feature type="chain" id="PRO_0000251085" description="Probable chemoreceptor glutamine deamidase CheD">
    <location>
        <begin position="1"/>
        <end position="183"/>
    </location>
</feature>